<sequence length="204" mass="20764">MPGQQRRGGGSGGNEGGRRDNRREGGRGNAPVEKTPHLERVVAINRVAKVVKGGRRFSFTALVIVGDGDGTVGVGYGKAKEVPAAIAKGVEEAKKHFFKVPRIGQSIPHPVQGEDAAGVVLLKPASAGTGVIAGGPVRAVLECAGIHDVLSKSLGSSNPINIVHATLAALKGLESPEAVAARRGLPVEDVAPAAMLASRAEVAS</sequence>
<name>RS5_SALTO</name>
<comment type="function">
    <text evidence="1">With S4 and S12 plays an important role in translational accuracy.</text>
</comment>
<comment type="function">
    <text evidence="1">Located at the back of the 30S subunit body where it stabilizes the conformation of the head with respect to the body.</text>
</comment>
<comment type="subunit">
    <text evidence="1">Part of the 30S ribosomal subunit. Contacts proteins S4 and S8.</text>
</comment>
<comment type="domain">
    <text>The N-terminal domain interacts with the head of the 30S subunit; the C-terminal domain interacts with the body and contacts protein S4. The interaction surface between S4 and S5 is involved in control of translational fidelity.</text>
</comment>
<comment type="similarity">
    <text evidence="1">Belongs to the universal ribosomal protein uS5 family.</text>
</comment>
<protein>
    <recommendedName>
        <fullName evidence="1">Small ribosomal subunit protein uS5</fullName>
    </recommendedName>
    <alternativeName>
        <fullName evidence="3">30S ribosomal protein S5</fullName>
    </alternativeName>
</protein>
<gene>
    <name evidence="1" type="primary">rpsE</name>
    <name type="ordered locus">Strop_3906</name>
</gene>
<dbReference type="EMBL" id="CP000667">
    <property type="protein sequence ID" value="ABP56336.1"/>
    <property type="molecule type" value="Genomic_DNA"/>
</dbReference>
<dbReference type="RefSeq" id="WP_012015111.1">
    <property type="nucleotide sequence ID" value="NC_009380.1"/>
</dbReference>
<dbReference type="SMR" id="A4XBM9"/>
<dbReference type="STRING" id="369723.Strop_3906"/>
<dbReference type="KEGG" id="stp:Strop_3906"/>
<dbReference type="PATRIC" id="fig|369723.5.peg.4032"/>
<dbReference type="eggNOG" id="COG0098">
    <property type="taxonomic scope" value="Bacteria"/>
</dbReference>
<dbReference type="HOGENOM" id="CLU_065898_1_2_11"/>
<dbReference type="Proteomes" id="UP000000235">
    <property type="component" value="Chromosome"/>
</dbReference>
<dbReference type="GO" id="GO:0015935">
    <property type="term" value="C:small ribosomal subunit"/>
    <property type="evidence" value="ECO:0007669"/>
    <property type="project" value="InterPro"/>
</dbReference>
<dbReference type="GO" id="GO:0019843">
    <property type="term" value="F:rRNA binding"/>
    <property type="evidence" value="ECO:0007669"/>
    <property type="project" value="UniProtKB-UniRule"/>
</dbReference>
<dbReference type="GO" id="GO:0003735">
    <property type="term" value="F:structural constituent of ribosome"/>
    <property type="evidence" value="ECO:0007669"/>
    <property type="project" value="InterPro"/>
</dbReference>
<dbReference type="GO" id="GO:0006412">
    <property type="term" value="P:translation"/>
    <property type="evidence" value="ECO:0007669"/>
    <property type="project" value="UniProtKB-UniRule"/>
</dbReference>
<dbReference type="FunFam" id="3.30.160.20:FF:000001">
    <property type="entry name" value="30S ribosomal protein S5"/>
    <property type="match status" value="1"/>
</dbReference>
<dbReference type="FunFam" id="3.30.230.10:FF:000002">
    <property type="entry name" value="30S ribosomal protein S5"/>
    <property type="match status" value="1"/>
</dbReference>
<dbReference type="Gene3D" id="3.30.160.20">
    <property type="match status" value="1"/>
</dbReference>
<dbReference type="Gene3D" id="3.30.230.10">
    <property type="match status" value="1"/>
</dbReference>
<dbReference type="HAMAP" id="MF_01307_B">
    <property type="entry name" value="Ribosomal_uS5_B"/>
    <property type="match status" value="1"/>
</dbReference>
<dbReference type="InterPro" id="IPR020568">
    <property type="entry name" value="Ribosomal_Su5_D2-typ_SF"/>
</dbReference>
<dbReference type="InterPro" id="IPR000851">
    <property type="entry name" value="Ribosomal_uS5"/>
</dbReference>
<dbReference type="InterPro" id="IPR005712">
    <property type="entry name" value="Ribosomal_uS5_bac-type"/>
</dbReference>
<dbReference type="InterPro" id="IPR005324">
    <property type="entry name" value="Ribosomal_uS5_C"/>
</dbReference>
<dbReference type="InterPro" id="IPR013810">
    <property type="entry name" value="Ribosomal_uS5_N"/>
</dbReference>
<dbReference type="InterPro" id="IPR018192">
    <property type="entry name" value="Ribosomal_uS5_N_CS"/>
</dbReference>
<dbReference type="InterPro" id="IPR014721">
    <property type="entry name" value="Ribsml_uS5_D2-typ_fold_subgr"/>
</dbReference>
<dbReference type="NCBIfam" id="TIGR01021">
    <property type="entry name" value="rpsE_bact"/>
    <property type="match status" value="1"/>
</dbReference>
<dbReference type="PANTHER" id="PTHR48277">
    <property type="entry name" value="MITOCHONDRIAL RIBOSOMAL PROTEIN S5"/>
    <property type="match status" value="1"/>
</dbReference>
<dbReference type="PANTHER" id="PTHR48277:SF1">
    <property type="entry name" value="MITOCHONDRIAL RIBOSOMAL PROTEIN S5"/>
    <property type="match status" value="1"/>
</dbReference>
<dbReference type="Pfam" id="PF00333">
    <property type="entry name" value="Ribosomal_S5"/>
    <property type="match status" value="1"/>
</dbReference>
<dbReference type="Pfam" id="PF03719">
    <property type="entry name" value="Ribosomal_S5_C"/>
    <property type="match status" value="1"/>
</dbReference>
<dbReference type="SUPFAM" id="SSF54768">
    <property type="entry name" value="dsRNA-binding domain-like"/>
    <property type="match status" value="1"/>
</dbReference>
<dbReference type="SUPFAM" id="SSF54211">
    <property type="entry name" value="Ribosomal protein S5 domain 2-like"/>
    <property type="match status" value="1"/>
</dbReference>
<dbReference type="PROSITE" id="PS00585">
    <property type="entry name" value="RIBOSOMAL_S5"/>
    <property type="match status" value="1"/>
</dbReference>
<dbReference type="PROSITE" id="PS50881">
    <property type="entry name" value="S5_DSRBD"/>
    <property type="match status" value="1"/>
</dbReference>
<evidence type="ECO:0000255" key="1">
    <source>
        <dbReference type="HAMAP-Rule" id="MF_01307"/>
    </source>
</evidence>
<evidence type="ECO:0000256" key="2">
    <source>
        <dbReference type="SAM" id="MobiDB-lite"/>
    </source>
</evidence>
<evidence type="ECO:0000305" key="3"/>
<reference key="1">
    <citation type="journal article" date="2007" name="Proc. Natl. Acad. Sci. U.S.A.">
        <title>Genome sequencing reveals complex secondary metabolome in the marine actinomycete Salinispora tropica.</title>
        <authorList>
            <person name="Udwary D.W."/>
            <person name="Zeigler L."/>
            <person name="Asolkar R.N."/>
            <person name="Singan V."/>
            <person name="Lapidus A."/>
            <person name="Fenical W."/>
            <person name="Jensen P.R."/>
            <person name="Moore B.S."/>
        </authorList>
    </citation>
    <scope>NUCLEOTIDE SEQUENCE [LARGE SCALE GENOMIC DNA]</scope>
    <source>
        <strain>ATCC BAA-916 / DSM 44818 / JCM 13857 / NBRC 105044 / CNB-440</strain>
    </source>
</reference>
<keyword id="KW-1185">Reference proteome</keyword>
<keyword id="KW-0687">Ribonucleoprotein</keyword>
<keyword id="KW-0689">Ribosomal protein</keyword>
<keyword id="KW-0694">RNA-binding</keyword>
<keyword id="KW-0699">rRNA-binding</keyword>
<feature type="chain" id="PRO_1000086054" description="Small ribosomal subunit protein uS5">
    <location>
        <begin position="1"/>
        <end position="204"/>
    </location>
</feature>
<feature type="domain" description="S5 DRBM" evidence="1">
    <location>
        <begin position="37"/>
        <end position="100"/>
    </location>
</feature>
<feature type="region of interest" description="Disordered" evidence="2">
    <location>
        <begin position="1"/>
        <end position="34"/>
    </location>
</feature>
<feature type="compositionally biased region" description="Gly residues" evidence="2">
    <location>
        <begin position="1"/>
        <end position="15"/>
    </location>
</feature>
<feature type="compositionally biased region" description="Basic and acidic residues" evidence="2">
    <location>
        <begin position="16"/>
        <end position="26"/>
    </location>
</feature>
<accession>A4XBM9</accession>
<organism>
    <name type="scientific">Salinispora tropica (strain ATCC BAA-916 / DSM 44818 / JCM 13857 / NBRC 105044 / CNB-440)</name>
    <dbReference type="NCBI Taxonomy" id="369723"/>
    <lineage>
        <taxon>Bacteria</taxon>
        <taxon>Bacillati</taxon>
        <taxon>Actinomycetota</taxon>
        <taxon>Actinomycetes</taxon>
        <taxon>Micromonosporales</taxon>
        <taxon>Micromonosporaceae</taxon>
        <taxon>Salinispora</taxon>
    </lineage>
</organism>
<proteinExistence type="inferred from homology"/>